<gene>
    <name type="ordered locus">MW0643</name>
</gene>
<reference key="1">
    <citation type="journal article" date="2002" name="Lancet">
        <title>Genome and virulence determinants of high virulence community-acquired MRSA.</title>
        <authorList>
            <person name="Baba T."/>
            <person name="Takeuchi F."/>
            <person name="Kuroda M."/>
            <person name="Yuzawa H."/>
            <person name="Aoki K."/>
            <person name="Oguchi A."/>
            <person name="Nagai Y."/>
            <person name="Iwama N."/>
            <person name="Asano K."/>
            <person name="Naimi T."/>
            <person name="Kuroda H."/>
            <person name="Cui L."/>
            <person name="Yamamoto K."/>
            <person name="Hiramatsu K."/>
        </authorList>
    </citation>
    <scope>NUCLEOTIDE SEQUENCE [LARGE SCALE GENOMIC DNA]</scope>
    <source>
        <strain>MW2</strain>
    </source>
</reference>
<evidence type="ECO:0000255" key="1">
    <source>
        <dbReference type="HAMAP-Rule" id="MF_00489"/>
    </source>
</evidence>
<accession>Q8NXQ5</accession>
<feature type="chain" id="PRO_0000176012" description="UPF0178 protein MW0643">
    <location>
        <begin position="1"/>
        <end position="152"/>
    </location>
</feature>
<name>Y643_STAAW</name>
<comment type="similarity">
    <text evidence="1">Belongs to the UPF0178 family.</text>
</comment>
<dbReference type="EMBL" id="BA000033">
    <property type="protein sequence ID" value="BAB94508.1"/>
    <property type="molecule type" value="Genomic_DNA"/>
</dbReference>
<dbReference type="RefSeq" id="WP_000148828.1">
    <property type="nucleotide sequence ID" value="NC_003923.1"/>
</dbReference>
<dbReference type="SMR" id="Q8NXQ5"/>
<dbReference type="KEGG" id="sam:MW0643"/>
<dbReference type="HOGENOM" id="CLU_106619_0_0_9"/>
<dbReference type="HAMAP" id="MF_00489">
    <property type="entry name" value="UPF0178"/>
    <property type="match status" value="1"/>
</dbReference>
<dbReference type="InterPro" id="IPR003791">
    <property type="entry name" value="UPF0178"/>
</dbReference>
<dbReference type="NCBIfam" id="NF001095">
    <property type="entry name" value="PRK00124.1"/>
    <property type="match status" value="1"/>
</dbReference>
<dbReference type="PANTHER" id="PTHR35146">
    <property type="entry name" value="UPF0178 PROTEIN YAII"/>
    <property type="match status" value="1"/>
</dbReference>
<dbReference type="PANTHER" id="PTHR35146:SF1">
    <property type="entry name" value="UPF0178 PROTEIN YAII"/>
    <property type="match status" value="1"/>
</dbReference>
<dbReference type="Pfam" id="PF02639">
    <property type="entry name" value="DUF188"/>
    <property type="match status" value="1"/>
</dbReference>
<proteinExistence type="inferred from homology"/>
<sequence>MTHIIIDGDACPVVDSIIDLTTETGIFVTIIRSFSHFSNQLYPPHVSTLYVDDGPDAVDYKIVQLSTKDDIVVTQDYGLASLLVDKVLIVMHHNGKIYNSKNIQQLLDKRYMNAQIRKQGGRHKGPPPFTKQDQKVFEQSLLKVIHRIKELD</sequence>
<organism>
    <name type="scientific">Staphylococcus aureus (strain MW2)</name>
    <dbReference type="NCBI Taxonomy" id="196620"/>
    <lineage>
        <taxon>Bacteria</taxon>
        <taxon>Bacillati</taxon>
        <taxon>Bacillota</taxon>
        <taxon>Bacilli</taxon>
        <taxon>Bacillales</taxon>
        <taxon>Staphylococcaceae</taxon>
        <taxon>Staphylococcus</taxon>
    </lineage>
</organism>
<protein>
    <recommendedName>
        <fullName evidence="1">UPF0178 protein MW0643</fullName>
    </recommendedName>
</protein>